<sequence>MKLNTLQLENYRNYDEVTLKCHPDVNILIGENAQGKTNLLESIYTLALAKSHRTSNDKELIRFNADYAKIEGELSYRHGTMPLTMFITKKGKQVKVNHLEQSRLTQYIGHLNVVLFAPEDLNIVKGSPQIRRRFIDMELGQISAVYLNDLAQYQRILKQKNNYLKQLQLGQKKDLTMLEVLNQQFAEYAMKVTDKRAHFIQELESLAKPIHAGITNDKEALSLNYLPSLKFDYAQNEAARLEEIMSILSDNMQREKERGISLFGPHRDDISFDVNGMDAQTYGSQGQQRTTALSIKLAEIELMNIEVGEYPILLLDDVLSELDDSRQTHLLSTIQHKVQTFVTTTSVDGIDHEIMNNAKLYRINQGEIIK</sequence>
<keyword id="KW-0067">ATP-binding</keyword>
<keyword id="KW-0963">Cytoplasm</keyword>
<keyword id="KW-0227">DNA damage</keyword>
<keyword id="KW-0234">DNA repair</keyword>
<keyword id="KW-0235">DNA replication</keyword>
<keyword id="KW-0238">DNA-binding</keyword>
<keyword id="KW-0547">Nucleotide-binding</keyword>
<keyword id="KW-0742">SOS response</keyword>
<accession>P68864</accession>
<accession>P29232</accession>
<evidence type="ECO:0000250" key="1"/>
<evidence type="ECO:0000255" key="2"/>
<evidence type="ECO:0000305" key="3"/>
<reference key="1">
    <citation type="journal article" date="2002" name="Lancet">
        <title>Genome and virulence determinants of high virulence community-acquired MRSA.</title>
        <authorList>
            <person name="Baba T."/>
            <person name="Takeuchi F."/>
            <person name="Kuroda M."/>
            <person name="Yuzawa H."/>
            <person name="Aoki K."/>
            <person name="Oguchi A."/>
            <person name="Nagai Y."/>
            <person name="Iwama N."/>
            <person name="Asano K."/>
            <person name="Naimi T."/>
            <person name="Kuroda H."/>
            <person name="Cui L."/>
            <person name="Yamamoto K."/>
            <person name="Hiramatsu K."/>
        </authorList>
    </citation>
    <scope>NUCLEOTIDE SEQUENCE [LARGE SCALE GENOMIC DNA]</scope>
    <source>
        <strain>MW2</strain>
    </source>
</reference>
<proteinExistence type="inferred from homology"/>
<gene>
    <name type="primary">recF</name>
    <name type="ordered locus">MW0004</name>
</gene>
<feature type="chain" id="PRO_0000196462" description="DNA replication and repair protein RecF">
    <location>
        <begin position="1"/>
        <end position="370"/>
    </location>
</feature>
<feature type="binding site" evidence="2">
    <location>
        <begin position="30"/>
        <end position="37"/>
    </location>
    <ligand>
        <name>ATP</name>
        <dbReference type="ChEBI" id="CHEBI:30616"/>
    </ligand>
</feature>
<comment type="function">
    <text evidence="1">The RecF protein is involved in DNA metabolism; it is required for DNA replication and normal SOS inducibility. RecF binds preferentially to single-stranded, linear DNA. It also seems to bind ATP (By similarity).</text>
</comment>
<comment type="subcellular location">
    <subcellularLocation>
        <location evidence="1">Cytoplasm</location>
    </subcellularLocation>
</comment>
<comment type="similarity">
    <text evidence="3">Belongs to the RecF family.</text>
</comment>
<name>RECF_STAAW</name>
<organism>
    <name type="scientific">Staphylococcus aureus (strain MW2)</name>
    <dbReference type="NCBI Taxonomy" id="196620"/>
    <lineage>
        <taxon>Bacteria</taxon>
        <taxon>Bacillati</taxon>
        <taxon>Bacillota</taxon>
        <taxon>Bacilli</taxon>
        <taxon>Bacillales</taxon>
        <taxon>Staphylococcaceae</taxon>
        <taxon>Staphylococcus</taxon>
    </lineage>
</organism>
<protein>
    <recommendedName>
        <fullName>DNA replication and repair protein RecF</fullName>
    </recommendedName>
</protein>
<dbReference type="EMBL" id="BA000033">
    <property type="protein sequence ID" value="BAB93869.1"/>
    <property type="molecule type" value="Genomic_DNA"/>
</dbReference>
<dbReference type="RefSeq" id="WP_000775113.1">
    <property type="nucleotide sequence ID" value="NC_003923.1"/>
</dbReference>
<dbReference type="SMR" id="P68864"/>
<dbReference type="KEGG" id="sam:MW0004"/>
<dbReference type="HOGENOM" id="CLU_040267_0_1_9"/>
<dbReference type="GO" id="GO:0005737">
    <property type="term" value="C:cytoplasm"/>
    <property type="evidence" value="ECO:0007669"/>
    <property type="project" value="UniProtKB-SubCell"/>
</dbReference>
<dbReference type="GO" id="GO:0005524">
    <property type="term" value="F:ATP binding"/>
    <property type="evidence" value="ECO:0007669"/>
    <property type="project" value="UniProtKB-UniRule"/>
</dbReference>
<dbReference type="GO" id="GO:0003697">
    <property type="term" value="F:single-stranded DNA binding"/>
    <property type="evidence" value="ECO:0007669"/>
    <property type="project" value="UniProtKB-UniRule"/>
</dbReference>
<dbReference type="GO" id="GO:0006260">
    <property type="term" value="P:DNA replication"/>
    <property type="evidence" value="ECO:0007669"/>
    <property type="project" value="UniProtKB-UniRule"/>
</dbReference>
<dbReference type="GO" id="GO:0000731">
    <property type="term" value="P:DNA synthesis involved in DNA repair"/>
    <property type="evidence" value="ECO:0007669"/>
    <property type="project" value="TreeGrafter"/>
</dbReference>
<dbReference type="GO" id="GO:0006302">
    <property type="term" value="P:double-strand break repair"/>
    <property type="evidence" value="ECO:0007669"/>
    <property type="project" value="TreeGrafter"/>
</dbReference>
<dbReference type="GO" id="GO:0009432">
    <property type="term" value="P:SOS response"/>
    <property type="evidence" value="ECO:0007669"/>
    <property type="project" value="UniProtKB-UniRule"/>
</dbReference>
<dbReference type="CDD" id="cd03242">
    <property type="entry name" value="ABC_RecF"/>
    <property type="match status" value="1"/>
</dbReference>
<dbReference type="FunFam" id="1.20.1050.90:FF:000002">
    <property type="entry name" value="DNA replication and repair protein RecF"/>
    <property type="match status" value="1"/>
</dbReference>
<dbReference type="Gene3D" id="3.40.50.300">
    <property type="entry name" value="P-loop containing nucleotide triphosphate hydrolases"/>
    <property type="match status" value="1"/>
</dbReference>
<dbReference type="Gene3D" id="1.20.1050.90">
    <property type="entry name" value="RecF/RecN/SMC, N-terminal domain"/>
    <property type="match status" value="1"/>
</dbReference>
<dbReference type="HAMAP" id="MF_00365">
    <property type="entry name" value="RecF"/>
    <property type="match status" value="1"/>
</dbReference>
<dbReference type="InterPro" id="IPR001238">
    <property type="entry name" value="DNA-binding_RecF"/>
</dbReference>
<dbReference type="InterPro" id="IPR018078">
    <property type="entry name" value="DNA-binding_RecF_CS"/>
</dbReference>
<dbReference type="InterPro" id="IPR027417">
    <property type="entry name" value="P-loop_NTPase"/>
</dbReference>
<dbReference type="InterPro" id="IPR003395">
    <property type="entry name" value="RecF/RecN/SMC_N"/>
</dbReference>
<dbReference type="InterPro" id="IPR042174">
    <property type="entry name" value="RecF_2"/>
</dbReference>
<dbReference type="NCBIfam" id="TIGR00611">
    <property type="entry name" value="recf"/>
    <property type="match status" value="1"/>
</dbReference>
<dbReference type="PANTHER" id="PTHR32182">
    <property type="entry name" value="DNA REPLICATION AND REPAIR PROTEIN RECF"/>
    <property type="match status" value="1"/>
</dbReference>
<dbReference type="PANTHER" id="PTHR32182:SF0">
    <property type="entry name" value="DNA REPLICATION AND REPAIR PROTEIN RECF"/>
    <property type="match status" value="1"/>
</dbReference>
<dbReference type="Pfam" id="PF02463">
    <property type="entry name" value="SMC_N"/>
    <property type="match status" value="1"/>
</dbReference>
<dbReference type="SUPFAM" id="SSF52540">
    <property type="entry name" value="P-loop containing nucleoside triphosphate hydrolases"/>
    <property type="match status" value="1"/>
</dbReference>
<dbReference type="PROSITE" id="PS00617">
    <property type="entry name" value="RECF_1"/>
    <property type="match status" value="1"/>
</dbReference>
<dbReference type="PROSITE" id="PS00618">
    <property type="entry name" value="RECF_2"/>
    <property type="match status" value="1"/>
</dbReference>